<sequence length="731" mass="80752">MEELIVELRLFLELLDHEYLTSTVREKKAVLTNILLRMQSSKGFEVKDHAQKAETNNLPAPPQMPLPEIPQPWLPPDSGPPPLPTSSLPEGYYEEAVPLSPGKAPEYITSNYDSEAMGSSYESYDEEEEDGKGKKTQHQCHHEEASMDLVKDAKICAFLLRKKRFGQWTKLLCVIKDTKLLCYKSSKDQQPQMELPLQGCSITYIPRDSKKKKHELKITQQGTDPLVLAVQSKEQAEQWLKVIKEAYSGCSGPVDPECSPPPSASVPVNKAELEKKLSSERPSSDGEGVVENGVTTCNGKEQAKRKKPSKSEAKGTVSKVTGKKITKIIGLGKKKPSTDEQTSSAEEDVPTCGYLNVLSNSRWRERWCRVKDSKLILHKDRADLKTHIVSIPLRGCEVIPGLDSKHPLTFRLLRNGQEVAVLEASSSEDMGRWIGILLAETGSSTDPGALHYDYIDVEMSANVIQTAKQTFCFMNRRAVSTSPYLGSLSNGYAHPSGTALHYDDVPCVNGSLKNKKPPASSNGLPVKGRAPSSQQKKVESAGGVKRTASNAEQYKYGKNRVEADAKRLQSKEEELLKRKEALRNRLAQLRKERKDLRAAIEVNAGRKTQVALEDKLKRLEEECKQREAERVSLELELTEVKESLKKALAGGVTLGLAIEPKSGTSSPQSPVFRHRTLENSPISSCDTSDAEGPLPVNSAAVLKKSQPSSSSSPCRGHVLQKAREWELKNGT</sequence>
<evidence type="ECO:0000250" key="1"/>
<evidence type="ECO:0000250" key="2">
    <source>
        <dbReference type="UniProtKB" id="Q80YS6"/>
    </source>
</evidence>
<evidence type="ECO:0000250" key="3">
    <source>
        <dbReference type="UniProtKB" id="Q8N556"/>
    </source>
</evidence>
<evidence type="ECO:0000255" key="4"/>
<evidence type="ECO:0000255" key="5">
    <source>
        <dbReference type="PROSITE-ProRule" id="PRU00145"/>
    </source>
</evidence>
<evidence type="ECO:0000256" key="6">
    <source>
        <dbReference type="SAM" id="MobiDB-lite"/>
    </source>
</evidence>
<evidence type="ECO:0000269" key="7">
    <source>
    </source>
</evidence>
<evidence type="ECO:0007744" key="8">
    <source>
    </source>
</evidence>
<proteinExistence type="evidence at protein level"/>
<protein>
    <recommendedName>
        <fullName>Actin filament-associated protein 1</fullName>
    </recommendedName>
    <alternativeName>
        <fullName>110 kDa actin filament-associated protein</fullName>
        <shortName>AFAP-110</shortName>
    </alternativeName>
</protein>
<reference key="1">
    <citation type="journal article" date="2002" name="Am. J. Physiol.">
        <title>Molecular cloning of actin filament-associated protein: a putative adaptor in stretch-induced Src activation.</title>
        <authorList>
            <person name="Lodyga M."/>
            <person name="Bai X.-H."/>
            <person name="Mourgeon E."/>
            <person name="Han B."/>
            <person name="Keshavjee S."/>
            <person name="Liu M."/>
        </authorList>
    </citation>
    <scope>NUCLEOTIDE SEQUENCE [MRNA]</scope>
    <scope>SUBCELLULAR LOCATION</scope>
    <scope>PHOSPHORYLATION</scope>
    <scope>INTERACTION WITH SRC</scope>
    <scope>TISSUE SPECIFICITY</scope>
    <source>
        <strain>Wistar</strain>
        <tissue>Lung</tissue>
    </source>
</reference>
<reference key="2">
    <citation type="journal article" date="2012" name="Nat. Commun.">
        <title>Quantitative maps of protein phosphorylation sites across 14 different rat organs and tissues.</title>
        <authorList>
            <person name="Lundby A."/>
            <person name="Secher A."/>
            <person name="Lage K."/>
            <person name="Nordsborg N.B."/>
            <person name="Dmytriyev A."/>
            <person name="Lundby C."/>
            <person name="Olsen J.V."/>
        </authorList>
    </citation>
    <scope>PHOSPHORYLATION [LARGE SCALE ANALYSIS] AT SER-669</scope>
    <scope>IDENTIFICATION BY MASS SPECTROMETRY [LARGE SCALE ANALYSIS]</scope>
</reference>
<organism>
    <name type="scientific">Rattus norvegicus</name>
    <name type="common">Rat</name>
    <dbReference type="NCBI Taxonomy" id="10116"/>
    <lineage>
        <taxon>Eukaryota</taxon>
        <taxon>Metazoa</taxon>
        <taxon>Chordata</taxon>
        <taxon>Craniata</taxon>
        <taxon>Vertebrata</taxon>
        <taxon>Euteleostomi</taxon>
        <taxon>Mammalia</taxon>
        <taxon>Eutheria</taxon>
        <taxon>Euarchontoglires</taxon>
        <taxon>Glires</taxon>
        <taxon>Rodentia</taxon>
        <taxon>Myomorpha</taxon>
        <taxon>Muroidea</taxon>
        <taxon>Muridae</taxon>
        <taxon>Murinae</taxon>
        <taxon>Rattus</taxon>
    </lineage>
</organism>
<dbReference type="EMBL" id="AY063759">
    <property type="protein sequence ID" value="AAL38984.1"/>
    <property type="molecule type" value="mRNA"/>
</dbReference>
<dbReference type="RefSeq" id="NP_543176.1">
    <property type="nucleotide sequence ID" value="NM_080900.1"/>
</dbReference>
<dbReference type="SMR" id="Q8VH46"/>
<dbReference type="FunCoup" id="Q8VH46">
    <property type="interactions" value="1318"/>
</dbReference>
<dbReference type="STRING" id="10116.ENSRNOP00000069497"/>
<dbReference type="iPTMnet" id="Q8VH46"/>
<dbReference type="PhosphoSitePlus" id="Q8VH46"/>
<dbReference type="PaxDb" id="10116-ENSRNOP00000010346"/>
<dbReference type="GeneID" id="140935"/>
<dbReference type="KEGG" id="rno:140935"/>
<dbReference type="AGR" id="RGD:619959"/>
<dbReference type="CTD" id="60312"/>
<dbReference type="RGD" id="619959">
    <property type="gene designation" value="Afap1"/>
</dbReference>
<dbReference type="eggNOG" id="ENOG502QQI1">
    <property type="taxonomic scope" value="Eukaryota"/>
</dbReference>
<dbReference type="InParanoid" id="Q8VH46"/>
<dbReference type="PhylomeDB" id="Q8VH46"/>
<dbReference type="PRO" id="PR:Q8VH46"/>
<dbReference type="Proteomes" id="UP000002494">
    <property type="component" value="Unplaced"/>
</dbReference>
<dbReference type="GO" id="GO:0005884">
    <property type="term" value="C:actin filament"/>
    <property type="evidence" value="ECO:0000314"/>
    <property type="project" value="RGD"/>
</dbReference>
<dbReference type="GO" id="GO:0005829">
    <property type="term" value="C:cytosol"/>
    <property type="evidence" value="ECO:0000318"/>
    <property type="project" value="GO_Central"/>
</dbReference>
<dbReference type="GO" id="GO:0001725">
    <property type="term" value="C:stress fiber"/>
    <property type="evidence" value="ECO:0007669"/>
    <property type="project" value="UniProtKB-SubCell"/>
</dbReference>
<dbReference type="GO" id="GO:0003779">
    <property type="term" value="F:actin binding"/>
    <property type="evidence" value="ECO:0007669"/>
    <property type="project" value="UniProtKB-KW"/>
</dbReference>
<dbReference type="GO" id="GO:0042169">
    <property type="term" value="F:SH2 domain binding"/>
    <property type="evidence" value="ECO:0000353"/>
    <property type="project" value="RGD"/>
</dbReference>
<dbReference type="GO" id="GO:0017124">
    <property type="term" value="F:SH3 domain binding"/>
    <property type="evidence" value="ECO:0000353"/>
    <property type="project" value="RGD"/>
</dbReference>
<dbReference type="GO" id="GO:0071260">
    <property type="term" value="P:cellular response to mechanical stimulus"/>
    <property type="evidence" value="ECO:0000270"/>
    <property type="project" value="RGD"/>
</dbReference>
<dbReference type="GO" id="GO:0009966">
    <property type="term" value="P:regulation of signal transduction"/>
    <property type="evidence" value="ECO:0000314"/>
    <property type="project" value="RGD"/>
</dbReference>
<dbReference type="CDD" id="cd13306">
    <property type="entry name" value="PH1_AFAP"/>
    <property type="match status" value="1"/>
</dbReference>
<dbReference type="CDD" id="cd13307">
    <property type="entry name" value="PH2_AFAP"/>
    <property type="match status" value="1"/>
</dbReference>
<dbReference type="FunFam" id="2.30.29.30:FF:000122">
    <property type="entry name" value="Actin filament associated protein 1"/>
    <property type="match status" value="1"/>
</dbReference>
<dbReference type="FunFam" id="2.30.29.30:FF:000020">
    <property type="entry name" value="Actin filament-associated protein 1-like 2 isoform 1"/>
    <property type="match status" value="1"/>
</dbReference>
<dbReference type="Gene3D" id="2.30.29.30">
    <property type="entry name" value="Pleckstrin-homology domain (PH domain)/Phosphotyrosine-binding domain (PTB)"/>
    <property type="match status" value="2"/>
</dbReference>
<dbReference type="InterPro" id="IPR030113">
    <property type="entry name" value="AFAP"/>
</dbReference>
<dbReference type="InterPro" id="IPR011993">
    <property type="entry name" value="PH-like_dom_sf"/>
</dbReference>
<dbReference type="InterPro" id="IPR001849">
    <property type="entry name" value="PH_domain"/>
</dbReference>
<dbReference type="PANTHER" id="PTHR14338:SF8">
    <property type="entry name" value="ACTIN FILAMENT-ASSOCIATED PROTEIN 1"/>
    <property type="match status" value="1"/>
</dbReference>
<dbReference type="PANTHER" id="PTHR14338">
    <property type="entry name" value="ACTIN FILAMENT-ASSOCIATED PROTEIN 1 FAMILY MEMBER"/>
    <property type="match status" value="1"/>
</dbReference>
<dbReference type="Pfam" id="PF00169">
    <property type="entry name" value="PH"/>
    <property type="match status" value="2"/>
</dbReference>
<dbReference type="SMART" id="SM00233">
    <property type="entry name" value="PH"/>
    <property type="match status" value="2"/>
</dbReference>
<dbReference type="SUPFAM" id="SSF50729">
    <property type="entry name" value="PH domain-like"/>
    <property type="match status" value="2"/>
</dbReference>
<dbReference type="PROSITE" id="PS50003">
    <property type="entry name" value="PH_DOMAIN"/>
    <property type="match status" value="2"/>
</dbReference>
<comment type="function">
    <text evidence="1">Can cross-link actin filaments into both network and bundle structures. May modulate changes in actin filament integrity and induce lamellipodia formation. May function as an adapter molecule that links other proteins, such as SRC and PKC to the actin cytoskeleton (By similarity).</text>
</comment>
<comment type="subunit">
    <text evidence="1">Monomer and homomultimer. Interacts via its C-terminus with F-actin; probably involving AFAP1 multimers (By similarity). Interacts with activated SRC SH3-SH2 domains. Interacts via its PH 1 domain with PRKCA, PRKCB and PRKCI (By similarity).</text>
</comment>
<comment type="subcellular location">
    <subcellularLocation>
        <location evidence="7">Cytoplasm</location>
        <location evidence="7">Cytoskeleton</location>
        <location evidence="7">Stress fiber</location>
    </subcellularLocation>
</comment>
<comment type="tissue specificity">
    <text evidence="7">Widely expressed with highest levels in brain.</text>
</comment>
<comment type="PTM">
    <text evidence="7">Phosphorylated on tyrosine residues.</text>
</comment>
<name>AFAP1_RAT</name>
<feature type="chain" id="PRO_0000317660" description="Actin filament-associated protein 1">
    <location>
        <begin position="1"/>
        <end position="731"/>
    </location>
</feature>
<feature type="domain" description="PH 1" evidence="5">
    <location>
        <begin position="152"/>
        <end position="248"/>
    </location>
</feature>
<feature type="domain" description="PH 2" evidence="5">
    <location>
        <begin position="348"/>
        <end position="442"/>
    </location>
</feature>
<feature type="region of interest" description="Disordered" evidence="6">
    <location>
        <begin position="46"/>
        <end position="90"/>
    </location>
</feature>
<feature type="region of interest" description="Disordered" evidence="6">
    <location>
        <begin position="118"/>
        <end position="138"/>
    </location>
</feature>
<feature type="region of interest" description="Disordered" evidence="6">
    <location>
        <begin position="252"/>
        <end position="318"/>
    </location>
</feature>
<feature type="region of interest" description="Disordered" evidence="6">
    <location>
        <begin position="511"/>
        <end position="550"/>
    </location>
</feature>
<feature type="region of interest" description="Interaction with F-actin" evidence="1">
    <location>
        <begin position="595"/>
        <end position="638"/>
    </location>
</feature>
<feature type="region of interest" description="Disordered" evidence="6">
    <location>
        <begin position="657"/>
        <end position="731"/>
    </location>
</feature>
<feature type="coiled-coil region" evidence="4">
    <location>
        <begin position="558"/>
        <end position="649"/>
    </location>
</feature>
<feature type="short sequence motif" description="SH3-binding" evidence="1">
    <location>
        <begin position="70"/>
        <end position="73"/>
    </location>
</feature>
<feature type="short sequence motif" description="SH2-binding 1" evidence="1">
    <location>
        <begin position="93"/>
        <end position="96"/>
    </location>
</feature>
<feature type="short sequence motif" description="SH2-binding 2" evidence="1">
    <location>
        <begin position="452"/>
        <end position="457"/>
    </location>
</feature>
<feature type="compositionally biased region" description="Pro residues" evidence="6">
    <location>
        <begin position="59"/>
        <end position="84"/>
    </location>
</feature>
<feature type="compositionally biased region" description="Basic and acidic residues" evidence="6">
    <location>
        <begin position="271"/>
        <end position="284"/>
    </location>
</feature>
<feature type="compositionally biased region" description="Polar residues" evidence="6">
    <location>
        <begin position="678"/>
        <end position="687"/>
    </location>
</feature>
<feature type="compositionally biased region" description="Basic and acidic residues" evidence="6">
    <location>
        <begin position="721"/>
        <end position="731"/>
    </location>
</feature>
<feature type="modified residue" description="N-acetylmethionine" evidence="3">
    <location>
        <position position="1"/>
    </location>
</feature>
<feature type="modified residue" description="Phosphoserine" evidence="3">
    <location>
        <position position="283"/>
    </location>
</feature>
<feature type="modified residue" description="Phosphoserine" evidence="3">
    <location>
        <position position="284"/>
    </location>
</feature>
<feature type="modified residue" description="Phosphoserine" evidence="3">
    <location>
        <position position="549"/>
    </location>
</feature>
<feature type="modified residue" description="Phosphoserine" evidence="3">
    <location>
        <position position="665"/>
    </location>
</feature>
<feature type="modified residue" description="Phosphoserine" evidence="3">
    <location>
        <position position="666"/>
    </location>
</feature>
<feature type="modified residue" description="Phosphoserine" evidence="8">
    <location>
        <position position="669"/>
    </location>
</feature>
<feature type="modified residue" description="Phosphothreonine" evidence="2">
    <location>
        <position position="676"/>
    </location>
</feature>
<feature type="modified residue" description="Phosphoserine" evidence="3">
    <location>
        <position position="680"/>
    </location>
</feature>
<feature type="modified residue" description="Phosphoserine" evidence="3">
    <location>
        <position position="688"/>
    </location>
</feature>
<gene>
    <name type="primary">Afap1</name>
    <name type="synonym">Afap</name>
</gene>
<accession>Q8VH46</accession>
<keyword id="KW-0007">Acetylation</keyword>
<keyword id="KW-0009">Actin-binding</keyword>
<keyword id="KW-0175">Coiled coil</keyword>
<keyword id="KW-0963">Cytoplasm</keyword>
<keyword id="KW-0206">Cytoskeleton</keyword>
<keyword id="KW-0597">Phosphoprotein</keyword>
<keyword id="KW-1185">Reference proteome</keyword>
<keyword id="KW-0677">Repeat</keyword>
<keyword id="KW-0729">SH3-binding</keyword>